<proteinExistence type="evidence at protein level"/>
<reference key="1">
    <citation type="journal article" date="2000" name="FEBS Lett.">
        <title>Characterization of Solt, a novel SoxLZ/Sox6 binding protein expressed in adult mouse testis.</title>
        <authorList>
            <person name="Yamashita A."/>
            <person name="Ito M."/>
            <person name="Takamatsu N."/>
            <person name="Shiba T."/>
        </authorList>
    </citation>
    <scope>NUCLEOTIDE SEQUENCE [MRNA] (ISOFORM 1)</scope>
    <scope>SUBCELLULAR LOCATION</scope>
    <scope>TISSUE SPECIFICITY</scope>
    <scope>POSSIBLE INTERACTION WITH SOX6</scope>
</reference>
<reference key="2">
    <citation type="journal article" date="2005" name="Science">
        <title>The transcriptional landscape of the mammalian genome.</title>
        <authorList>
            <person name="Carninci P."/>
            <person name="Kasukawa T."/>
            <person name="Katayama S."/>
            <person name="Gough J."/>
            <person name="Frith M.C."/>
            <person name="Maeda N."/>
            <person name="Oyama R."/>
            <person name="Ravasi T."/>
            <person name="Lenhard B."/>
            <person name="Wells C."/>
            <person name="Kodzius R."/>
            <person name="Shimokawa K."/>
            <person name="Bajic V.B."/>
            <person name="Brenner S.E."/>
            <person name="Batalov S."/>
            <person name="Forrest A.R."/>
            <person name="Zavolan M."/>
            <person name="Davis M.J."/>
            <person name="Wilming L.G."/>
            <person name="Aidinis V."/>
            <person name="Allen J.E."/>
            <person name="Ambesi-Impiombato A."/>
            <person name="Apweiler R."/>
            <person name="Aturaliya R.N."/>
            <person name="Bailey T.L."/>
            <person name="Bansal M."/>
            <person name="Baxter L."/>
            <person name="Beisel K.W."/>
            <person name="Bersano T."/>
            <person name="Bono H."/>
            <person name="Chalk A.M."/>
            <person name="Chiu K.P."/>
            <person name="Choudhary V."/>
            <person name="Christoffels A."/>
            <person name="Clutterbuck D.R."/>
            <person name="Crowe M.L."/>
            <person name="Dalla E."/>
            <person name="Dalrymple B.P."/>
            <person name="de Bono B."/>
            <person name="Della Gatta G."/>
            <person name="di Bernardo D."/>
            <person name="Down T."/>
            <person name="Engstrom P."/>
            <person name="Fagiolini M."/>
            <person name="Faulkner G."/>
            <person name="Fletcher C.F."/>
            <person name="Fukushima T."/>
            <person name="Furuno M."/>
            <person name="Futaki S."/>
            <person name="Gariboldi M."/>
            <person name="Georgii-Hemming P."/>
            <person name="Gingeras T.R."/>
            <person name="Gojobori T."/>
            <person name="Green R.E."/>
            <person name="Gustincich S."/>
            <person name="Harbers M."/>
            <person name="Hayashi Y."/>
            <person name="Hensch T.K."/>
            <person name="Hirokawa N."/>
            <person name="Hill D."/>
            <person name="Huminiecki L."/>
            <person name="Iacono M."/>
            <person name="Ikeo K."/>
            <person name="Iwama A."/>
            <person name="Ishikawa T."/>
            <person name="Jakt M."/>
            <person name="Kanapin A."/>
            <person name="Katoh M."/>
            <person name="Kawasawa Y."/>
            <person name="Kelso J."/>
            <person name="Kitamura H."/>
            <person name="Kitano H."/>
            <person name="Kollias G."/>
            <person name="Krishnan S.P."/>
            <person name="Kruger A."/>
            <person name="Kummerfeld S.K."/>
            <person name="Kurochkin I.V."/>
            <person name="Lareau L.F."/>
            <person name="Lazarevic D."/>
            <person name="Lipovich L."/>
            <person name="Liu J."/>
            <person name="Liuni S."/>
            <person name="McWilliam S."/>
            <person name="Madan Babu M."/>
            <person name="Madera M."/>
            <person name="Marchionni L."/>
            <person name="Matsuda H."/>
            <person name="Matsuzawa S."/>
            <person name="Miki H."/>
            <person name="Mignone F."/>
            <person name="Miyake S."/>
            <person name="Morris K."/>
            <person name="Mottagui-Tabar S."/>
            <person name="Mulder N."/>
            <person name="Nakano N."/>
            <person name="Nakauchi H."/>
            <person name="Ng P."/>
            <person name="Nilsson R."/>
            <person name="Nishiguchi S."/>
            <person name="Nishikawa S."/>
            <person name="Nori F."/>
            <person name="Ohara O."/>
            <person name="Okazaki Y."/>
            <person name="Orlando V."/>
            <person name="Pang K.C."/>
            <person name="Pavan W.J."/>
            <person name="Pavesi G."/>
            <person name="Pesole G."/>
            <person name="Petrovsky N."/>
            <person name="Piazza S."/>
            <person name="Reed J."/>
            <person name="Reid J.F."/>
            <person name="Ring B.Z."/>
            <person name="Ringwald M."/>
            <person name="Rost B."/>
            <person name="Ruan Y."/>
            <person name="Salzberg S.L."/>
            <person name="Sandelin A."/>
            <person name="Schneider C."/>
            <person name="Schoenbach C."/>
            <person name="Sekiguchi K."/>
            <person name="Semple C.A."/>
            <person name="Seno S."/>
            <person name="Sessa L."/>
            <person name="Sheng Y."/>
            <person name="Shibata Y."/>
            <person name="Shimada H."/>
            <person name="Shimada K."/>
            <person name="Silva D."/>
            <person name="Sinclair B."/>
            <person name="Sperling S."/>
            <person name="Stupka E."/>
            <person name="Sugiura K."/>
            <person name="Sultana R."/>
            <person name="Takenaka Y."/>
            <person name="Taki K."/>
            <person name="Tammoja K."/>
            <person name="Tan S.L."/>
            <person name="Tang S."/>
            <person name="Taylor M.S."/>
            <person name="Tegner J."/>
            <person name="Teichmann S.A."/>
            <person name="Ueda H.R."/>
            <person name="van Nimwegen E."/>
            <person name="Verardo R."/>
            <person name="Wei C.L."/>
            <person name="Yagi K."/>
            <person name="Yamanishi H."/>
            <person name="Zabarovsky E."/>
            <person name="Zhu S."/>
            <person name="Zimmer A."/>
            <person name="Hide W."/>
            <person name="Bult C."/>
            <person name="Grimmond S.M."/>
            <person name="Teasdale R.D."/>
            <person name="Liu E.T."/>
            <person name="Brusic V."/>
            <person name="Quackenbush J."/>
            <person name="Wahlestedt C."/>
            <person name="Mattick J.S."/>
            <person name="Hume D.A."/>
            <person name="Kai C."/>
            <person name="Sasaki D."/>
            <person name="Tomaru Y."/>
            <person name="Fukuda S."/>
            <person name="Kanamori-Katayama M."/>
            <person name="Suzuki M."/>
            <person name="Aoki J."/>
            <person name="Arakawa T."/>
            <person name="Iida J."/>
            <person name="Imamura K."/>
            <person name="Itoh M."/>
            <person name="Kato T."/>
            <person name="Kawaji H."/>
            <person name="Kawagashira N."/>
            <person name="Kawashima T."/>
            <person name="Kojima M."/>
            <person name="Kondo S."/>
            <person name="Konno H."/>
            <person name="Nakano K."/>
            <person name="Ninomiya N."/>
            <person name="Nishio T."/>
            <person name="Okada M."/>
            <person name="Plessy C."/>
            <person name="Shibata K."/>
            <person name="Shiraki T."/>
            <person name="Suzuki S."/>
            <person name="Tagami M."/>
            <person name="Waki K."/>
            <person name="Watahiki A."/>
            <person name="Okamura-Oho Y."/>
            <person name="Suzuki H."/>
            <person name="Kawai J."/>
            <person name="Hayashizaki Y."/>
        </authorList>
    </citation>
    <scope>NUCLEOTIDE SEQUENCE [LARGE SCALE MRNA] (ISOFORMS 2 AND 3)</scope>
    <source>
        <strain>C57BL/6J</strain>
        <tissue>Egg</tissue>
        <tissue>Spinal cord</tissue>
    </source>
</reference>
<reference key="3">
    <citation type="journal article" date="2004" name="Genome Res.">
        <title>The status, quality, and expansion of the NIH full-length cDNA project: the Mammalian Gene Collection (MGC).</title>
        <authorList>
            <consortium name="The MGC Project Team"/>
        </authorList>
    </citation>
    <scope>NUCLEOTIDE SEQUENCE [LARGE SCALE MRNA] OF 1-120</scope>
    <source>
        <strain>NMRI</strain>
        <tissue>Mammary tumor</tissue>
    </source>
</reference>
<name>CENPK_MOUSE</name>
<sequence length="271" mass="31686">MSENKQEVHPDTITDVEAVIDTEEELIKECEEMWKDMEDCQNKLSLIGTETLTNADAQLSLLIMQMKCLTAELGQWKKRKPEIIPLNEDVLLTLGKEEFQKLRCDLEMVLSTIQSKNEKLKEDLEREQQWLDEQQQILDTLNVLNSDVENQVVTLTESRIFNELTTKIRGIKEFKEKLLLTLGAFLDNHFPLPEASTPKKRKNIQDSNAQLITLNEILEMLINRMFDVPHDPYVKIRDSFWPPYIELLLRYGIALRHPEDPSQIRLEAFHQ</sequence>
<dbReference type="EMBL" id="AB043687">
    <property type="protein sequence ID" value="BAB16367.1"/>
    <property type="status" value="ALT_INIT"/>
    <property type="molecule type" value="mRNA"/>
</dbReference>
<dbReference type="EMBL" id="AK082939">
    <property type="protein sequence ID" value="BAC38702.1"/>
    <property type="molecule type" value="mRNA"/>
</dbReference>
<dbReference type="EMBL" id="AK135773">
    <property type="protein sequence ID" value="BAE22654.1"/>
    <property type="molecule type" value="mRNA"/>
</dbReference>
<dbReference type="EMBL" id="BC092351">
    <property type="protein sequence ID" value="AAH92351.1"/>
    <property type="status" value="ALT_SEQ"/>
    <property type="molecule type" value="mRNA"/>
</dbReference>
<dbReference type="CCDS" id="CCDS26750.1">
    <molecule id="Q9ESN5-2"/>
</dbReference>
<dbReference type="RefSeq" id="NP_001364022.1">
    <molecule id="Q9ESN5-1"/>
    <property type="nucleotide sequence ID" value="NM_001377093.1"/>
</dbReference>
<dbReference type="RefSeq" id="NP_001364023.1">
    <molecule id="Q9ESN5-1"/>
    <property type="nucleotide sequence ID" value="NM_001377094.1"/>
</dbReference>
<dbReference type="RefSeq" id="NP_001364024.1">
    <molecule id="Q9ESN5-1"/>
    <property type="nucleotide sequence ID" value="NM_001377095.1"/>
</dbReference>
<dbReference type="RefSeq" id="NP_068562.1">
    <property type="nucleotide sequence ID" value="NM_021790.2"/>
</dbReference>
<dbReference type="RefSeq" id="NP_851406.1">
    <molecule id="Q9ESN5-2"/>
    <property type="nucleotide sequence ID" value="NM_181061.6"/>
</dbReference>
<dbReference type="RefSeq" id="XP_017171041.1">
    <property type="nucleotide sequence ID" value="XM_017315552.1"/>
</dbReference>
<dbReference type="RefSeq" id="XP_017171042.1">
    <property type="nucleotide sequence ID" value="XM_017315553.1"/>
</dbReference>
<dbReference type="SMR" id="Q9ESN5"/>
<dbReference type="BioGRID" id="208561">
    <property type="interactions" value="20"/>
</dbReference>
<dbReference type="ComplexPortal" id="CPX-5704">
    <property type="entry name" value="Kinetochore CCAN complex"/>
</dbReference>
<dbReference type="FunCoup" id="Q9ESN5">
    <property type="interactions" value="1701"/>
</dbReference>
<dbReference type="IntAct" id="Q9ESN5">
    <property type="interactions" value="1"/>
</dbReference>
<dbReference type="MINT" id="Q9ESN5"/>
<dbReference type="STRING" id="10090.ENSMUSP00000022227"/>
<dbReference type="iPTMnet" id="Q9ESN5"/>
<dbReference type="PhosphoSitePlus" id="Q9ESN5"/>
<dbReference type="PaxDb" id="10090-ENSMUSP00000022227"/>
<dbReference type="PeptideAtlas" id="Q9ESN5"/>
<dbReference type="ProteomicsDB" id="280060">
    <molecule id="Q9ESN5-1"/>
</dbReference>
<dbReference type="ProteomicsDB" id="280061">
    <molecule id="Q9ESN5-2"/>
</dbReference>
<dbReference type="ProteomicsDB" id="280062">
    <molecule id="Q9ESN5-3"/>
</dbReference>
<dbReference type="Antibodypedia" id="23756">
    <property type="antibodies" value="190 antibodies from 26 providers"/>
</dbReference>
<dbReference type="DNASU" id="60411"/>
<dbReference type="Ensembl" id="ENSMUST00000070761.10">
    <molecule id="Q9ESN5-2"/>
    <property type="protein sequence ID" value="ENSMUSP00000070910.4"/>
    <property type="gene ID" value="ENSMUSG00000021714.16"/>
</dbReference>
<dbReference type="GeneID" id="60411"/>
<dbReference type="KEGG" id="mmu:60411"/>
<dbReference type="UCSC" id="uc007rtc.2">
    <molecule id="Q9ESN5-2"/>
    <property type="organism name" value="mouse"/>
</dbReference>
<dbReference type="UCSC" id="uc007rtd.2">
    <molecule id="Q9ESN5-1"/>
    <property type="organism name" value="mouse"/>
</dbReference>
<dbReference type="UCSC" id="uc007rtf.1">
    <molecule id="Q9ESN5-3"/>
    <property type="organism name" value="mouse"/>
</dbReference>
<dbReference type="AGR" id="MGI:1926210"/>
<dbReference type="CTD" id="64105"/>
<dbReference type="MGI" id="MGI:1926210">
    <property type="gene designation" value="Cenpk"/>
</dbReference>
<dbReference type="VEuPathDB" id="HostDB:ENSMUSG00000021714"/>
<dbReference type="eggNOG" id="ENOG502QVGW">
    <property type="taxonomic scope" value="Eukaryota"/>
</dbReference>
<dbReference type="GeneTree" id="ENSGT00390000006243"/>
<dbReference type="InParanoid" id="Q9ESN5"/>
<dbReference type="OrthoDB" id="9445768at2759"/>
<dbReference type="PhylomeDB" id="Q9ESN5"/>
<dbReference type="TreeFam" id="TF333264"/>
<dbReference type="Reactome" id="R-MMU-141444">
    <property type="pathway name" value="Amplification of signal from unattached kinetochores via a MAD2 inhibitory signal"/>
</dbReference>
<dbReference type="Reactome" id="R-MMU-2467813">
    <property type="pathway name" value="Separation of Sister Chromatids"/>
</dbReference>
<dbReference type="Reactome" id="R-MMU-2500257">
    <property type="pathway name" value="Resolution of Sister Chromatid Cohesion"/>
</dbReference>
<dbReference type="Reactome" id="R-MMU-5663220">
    <property type="pathway name" value="RHO GTPases Activate Formins"/>
</dbReference>
<dbReference type="Reactome" id="R-MMU-606279">
    <property type="pathway name" value="Deposition of new CENPA-containing nucleosomes at the centromere"/>
</dbReference>
<dbReference type="Reactome" id="R-MMU-68877">
    <property type="pathway name" value="Mitotic Prometaphase"/>
</dbReference>
<dbReference type="Reactome" id="R-MMU-9648025">
    <property type="pathway name" value="EML4 and NUDC in mitotic spindle formation"/>
</dbReference>
<dbReference type="BioGRID-ORCS" id="60411">
    <property type="hits" value="21 hits in 78 CRISPR screens"/>
</dbReference>
<dbReference type="PRO" id="PR:Q9ESN5"/>
<dbReference type="Proteomes" id="UP000000589">
    <property type="component" value="Chromosome 13"/>
</dbReference>
<dbReference type="RNAct" id="Q9ESN5">
    <property type="molecule type" value="protein"/>
</dbReference>
<dbReference type="Bgee" id="ENSMUSG00000021714">
    <property type="expression patterns" value="Expressed in ureter smooth muscle and 178 other cell types or tissues"/>
</dbReference>
<dbReference type="ExpressionAtlas" id="Q9ESN5">
    <property type="expression patterns" value="baseline and differential"/>
</dbReference>
<dbReference type="GO" id="GO:0000939">
    <property type="term" value="C:inner kinetochore"/>
    <property type="evidence" value="ECO:0000266"/>
    <property type="project" value="ComplexPortal"/>
</dbReference>
<dbReference type="GO" id="GO:0005634">
    <property type="term" value="C:nucleus"/>
    <property type="evidence" value="ECO:0000314"/>
    <property type="project" value="MGI"/>
</dbReference>
<dbReference type="GO" id="GO:0007059">
    <property type="term" value="P:chromosome segregation"/>
    <property type="evidence" value="ECO:0000303"/>
    <property type="project" value="ComplexPortal"/>
</dbReference>
<dbReference type="GO" id="GO:0051382">
    <property type="term" value="P:kinetochore assembly"/>
    <property type="evidence" value="ECO:0007669"/>
    <property type="project" value="InterPro"/>
</dbReference>
<dbReference type="GO" id="GO:0045944">
    <property type="term" value="P:positive regulation of transcription by RNA polymerase II"/>
    <property type="evidence" value="ECO:0000314"/>
    <property type="project" value="MGI"/>
</dbReference>
<dbReference type="InterPro" id="IPR020993">
    <property type="entry name" value="Centromere_CenpK"/>
</dbReference>
<dbReference type="PANTHER" id="PTHR14401">
    <property type="entry name" value="CENTROMERE PROTEIN K"/>
    <property type="match status" value="1"/>
</dbReference>
<dbReference type="PANTHER" id="PTHR14401:SF6">
    <property type="entry name" value="CENTROMERE PROTEIN K"/>
    <property type="match status" value="1"/>
</dbReference>
<dbReference type="Pfam" id="PF11802">
    <property type="entry name" value="CENP-K"/>
    <property type="match status" value="1"/>
</dbReference>
<protein>
    <recommendedName>
        <fullName>Centromere protein K</fullName>
        <shortName>CENP-K</shortName>
    </recommendedName>
    <alternativeName>
        <fullName>SoxLZ/Sox6 leucine zipper-binding protein in testis</fullName>
    </alternativeName>
</protein>
<gene>
    <name type="primary">Cenpk</name>
    <name type="synonym">Solt</name>
</gene>
<comment type="function">
    <text evidence="1">Component of the CENPA-CAD (nucleosome distal) complex, a complex recruited to centromeres which is involved in assembly of kinetochore proteins, mitotic progression and chromosome segregation. May be involved in incorporation of newly synthesized CENPA into centromeres via its interaction with the CENPA-NAC complex. Acts in coordination with KNL1 to recruit the NDC80 complex to the outer kinetochore (By similarity).</text>
</comment>
<comment type="subunit">
    <text>Component of the CENPA-CAD complex, composed of CENPI, CENPK, CENPL, CENPO, CENPP, CENPQ, CENPR and CENPS. The CENPA-CAD complex interacts with the CENPA-NAC complex, at least composed of CENPA, CENPC, CENPH, CENPM, CENPN, CENPT and CENPU. May interact with Sox6.</text>
</comment>
<comment type="subcellular location">
    <subcellularLocation>
        <location evidence="1">Nucleus</location>
    </subcellularLocation>
    <subcellularLocation>
        <location evidence="1">Chromosome</location>
        <location evidence="1">Centromere</location>
    </subcellularLocation>
    <subcellularLocation>
        <location evidence="1">Chromosome</location>
        <location evidence="1">Centromere</location>
        <location evidence="1">Kinetochore</location>
    </subcellularLocation>
    <text evidence="1">Localizes exclusively in the centromeres. The CENPA-CAD complex is probably recruited on centromeres by the CENPA-NAC complex (By similarity).</text>
</comment>
<comment type="alternative products">
    <event type="alternative splicing"/>
    <isoform>
        <id>Q9ESN5-1</id>
        <name>1</name>
        <sequence type="displayed"/>
    </isoform>
    <isoform>
        <id>Q9ESN5-2</id>
        <name>2</name>
        <sequence type="described" ref="VSP_020438"/>
    </isoform>
    <isoform>
        <id>Q9ESN5-3</id>
        <name>3</name>
        <sequence type="described" ref="VSP_020437 VSP_020439"/>
    </isoform>
</comment>
<comment type="tissue specificity">
    <text evidence="3">Highly expressed in testis.</text>
</comment>
<comment type="similarity">
    <text evidence="5">Belongs to the CENP-K/MCM22 family.</text>
</comment>
<comment type="sequence caution" evidence="5">
    <conflict type="miscellaneous discrepancy">
        <sequence resource="EMBL-CDS" id="AAH92351"/>
    </conflict>
    <text>Contaminating sequence. Potential poly-A sequence.</text>
</comment>
<comment type="sequence caution" evidence="5">
    <conflict type="erroneous initiation">
        <sequence resource="EMBL-CDS" id="BAB16367"/>
    </conflict>
</comment>
<accession>Q9ESN5</accession>
<accession>Q3UXA9</accession>
<accession>Q569Q3</accession>
<accession>Q8C469</accession>
<feature type="chain" id="PRO_0000249483" description="Centromere protein K">
    <location>
        <begin position="1"/>
        <end position="271"/>
    </location>
</feature>
<feature type="coiled-coil region" evidence="2">
    <location>
        <begin position="11"/>
        <end position="44"/>
    </location>
</feature>
<feature type="coiled-coil region" evidence="2">
    <location>
        <begin position="102"/>
        <end position="151"/>
    </location>
</feature>
<feature type="splice variant" id="VSP_020437" description="In isoform 3." evidence="4">
    <location>
        <begin position="1"/>
        <end position="107"/>
    </location>
</feature>
<feature type="splice variant" id="VSP_020438" description="In isoform 2." evidence="4">
    <original>MLINRMFDVPHDPYVKIRDSFWPPYIELLLRYGIALRHPEDPSQIRLEAFHQ</original>
    <variation>VPLRAMGSTLESCWFPRETLLEEAAFSLASASVG</variation>
    <location>
        <begin position="220"/>
        <end position="271"/>
    </location>
</feature>
<feature type="splice variant" id="VSP_020439" description="In isoform 3." evidence="4">
    <original>LEAFHQ</original>
    <variation>TSCMVGACGDQKSHH</variation>
    <location>
        <begin position="266"/>
        <end position="271"/>
    </location>
</feature>
<feature type="sequence conflict" description="In Ref. 3; AAH92351." evidence="5" ref="3">
    <original>S</original>
    <variation>T</variation>
    <location>
        <position position="115"/>
    </location>
</feature>
<keyword id="KW-0025">Alternative splicing</keyword>
<keyword id="KW-0137">Centromere</keyword>
<keyword id="KW-0160">Chromosomal rearrangement</keyword>
<keyword id="KW-0158">Chromosome</keyword>
<keyword id="KW-0175">Coiled coil</keyword>
<keyword id="KW-0995">Kinetochore</keyword>
<keyword id="KW-0539">Nucleus</keyword>
<keyword id="KW-1185">Reference proteome</keyword>
<organism>
    <name type="scientific">Mus musculus</name>
    <name type="common">Mouse</name>
    <dbReference type="NCBI Taxonomy" id="10090"/>
    <lineage>
        <taxon>Eukaryota</taxon>
        <taxon>Metazoa</taxon>
        <taxon>Chordata</taxon>
        <taxon>Craniata</taxon>
        <taxon>Vertebrata</taxon>
        <taxon>Euteleostomi</taxon>
        <taxon>Mammalia</taxon>
        <taxon>Eutheria</taxon>
        <taxon>Euarchontoglires</taxon>
        <taxon>Glires</taxon>
        <taxon>Rodentia</taxon>
        <taxon>Myomorpha</taxon>
        <taxon>Muroidea</taxon>
        <taxon>Muridae</taxon>
        <taxon>Murinae</taxon>
        <taxon>Mus</taxon>
        <taxon>Mus</taxon>
    </lineage>
</organism>
<evidence type="ECO:0000250" key="1"/>
<evidence type="ECO:0000255" key="2"/>
<evidence type="ECO:0000269" key="3">
    <source>
    </source>
</evidence>
<evidence type="ECO:0000303" key="4">
    <source>
    </source>
</evidence>
<evidence type="ECO:0000305" key="5"/>